<protein>
    <recommendedName>
        <fullName evidence="1">Bifunctional protein GlmU</fullName>
    </recommendedName>
    <domain>
        <recommendedName>
            <fullName evidence="1">UDP-N-acetylglucosamine pyrophosphorylase</fullName>
            <ecNumber evidence="1">2.7.7.23</ecNumber>
        </recommendedName>
        <alternativeName>
            <fullName evidence="1">N-acetylglucosamine-1-phosphate uridyltransferase</fullName>
        </alternativeName>
    </domain>
    <domain>
        <recommendedName>
            <fullName evidence="1">Glucosamine-1-phosphate N-acetyltransferase</fullName>
            <ecNumber evidence="1">2.3.1.157</ecNumber>
        </recommendedName>
    </domain>
</protein>
<accession>Q728D5</accession>
<proteinExistence type="inferred from homology"/>
<keyword id="KW-0012">Acyltransferase</keyword>
<keyword id="KW-0133">Cell shape</keyword>
<keyword id="KW-0961">Cell wall biogenesis/degradation</keyword>
<keyword id="KW-0963">Cytoplasm</keyword>
<keyword id="KW-0460">Magnesium</keyword>
<keyword id="KW-0479">Metal-binding</keyword>
<keyword id="KW-0511">Multifunctional enzyme</keyword>
<keyword id="KW-0548">Nucleotidyltransferase</keyword>
<keyword id="KW-0573">Peptidoglycan synthesis</keyword>
<keyword id="KW-1185">Reference proteome</keyword>
<keyword id="KW-0677">Repeat</keyword>
<keyword id="KW-0808">Transferase</keyword>
<sequence>MASTTGALILAAGKGTRMHSDKPKVLQTILGEPMLRFVMDALAPVFGDRVWTVVGHRADMIYAAFAGEDARFVVQEQQLGTGHALQMAWESLRAAGLDRVVVVNGDTPLLATETIDFFLKESAEADIAFMTLTLPDPGAYGRVVRHNGHVAAIVEAKDYDEALYGPEPSEINTGIYALRLDAVESLLPRLTNANRSGEYYITDLVGLAVAERMNVLGIQCGEDPNLLGVNNPAELIRSEALLRTRLVIGHIEGGVLIHAPETVRISPRATIEPGAEIYGPCEIYGTSRIARGAVVHSHCWLRNAEVESGSEVKSFSHLEGATVGKGCSVGPFARLRPGAVLDEEARVGNFVEMKKARLHKGAKAGHLTYLGDADVGAGANIGAGTITCNYDGKNKHRTVIGAGAFIGSNTALVAPVTVGDGSLVGAGSVITKDVPEASLAIARGRQTNLPRKPKA</sequence>
<name>GLMU_NITV2</name>
<dbReference type="EC" id="2.7.7.23" evidence="1"/>
<dbReference type="EC" id="2.3.1.157" evidence="1"/>
<dbReference type="EMBL" id="AE017285">
    <property type="protein sequence ID" value="AAS97140.1"/>
    <property type="molecule type" value="Genomic_DNA"/>
</dbReference>
<dbReference type="RefSeq" id="WP_010939937.1">
    <property type="nucleotide sequence ID" value="NC_002937.3"/>
</dbReference>
<dbReference type="RefSeq" id="YP_011880.1">
    <property type="nucleotide sequence ID" value="NC_002937.3"/>
</dbReference>
<dbReference type="SMR" id="Q728D5"/>
<dbReference type="IntAct" id="Q728D5">
    <property type="interactions" value="2"/>
</dbReference>
<dbReference type="STRING" id="882.DVU_2668"/>
<dbReference type="PaxDb" id="882-DVU_2668"/>
<dbReference type="EnsemblBacteria" id="AAS97140">
    <property type="protein sequence ID" value="AAS97140"/>
    <property type="gene ID" value="DVU_2668"/>
</dbReference>
<dbReference type="KEGG" id="dvu:DVU_2668"/>
<dbReference type="PATRIC" id="fig|882.5.peg.2412"/>
<dbReference type="eggNOG" id="COG1207">
    <property type="taxonomic scope" value="Bacteria"/>
</dbReference>
<dbReference type="HOGENOM" id="CLU_029499_15_2_7"/>
<dbReference type="OrthoDB" id="9775031at2"/>
<dbReference type="PhylomeDB" id="Q728D5"/>
<dbReference type="UniPathway" id="UPA00113">
    <property type="reaction ID" value="UER00532"/>
</dbReference>
<dbReference type="UniPathway" id="UPA00113">
    <property type="reaction ID" value="UER00533"/>
</dbReference>
<dbReference type="UniPathway" id="UPA00973"/>
<dbReference type="Proteomes" id="UP000002194">
    <property type="component" value="Chromosome"/>
</dbReference>
<dbReference type="GO" id="GO:0005737">
    <property type="term" value="C:cytoplasm"/>
    <property type="evidence" value="ECO:0007669"/>
    <property type="project" value="UniProtKB-SubCell"/>
</dbReference>
<dbReference type="GO" id="GO:0016020">
    <property type="term" value="C:membrane"/>
    <property type="evidence" value="ECO:0007669"/>
    <property type="project" value="GOC"/>
</dbReference>
<dbReference type="GO" id="GO:0019134">
    <property type="term" value="F:glucosamine-1-phosphate N-acetyltransferase activity"/>
    <property type="evidence" value="ECO:0007669"/>
    <property type="project" value="UniProtKB-UniRule"/>
</dbReference>
<dbReference type="GO" id="GO:0000287">
    <property type="term" value="F:magnesium ion binding"/>
    <property type="evidence" value="ECO:0007669"/>
    <property type="project" value="UniProtKB-UniRule"/>
</dbReference>
<dbReference type="GO" id="GO:0003977">
    <property type="term" value="F:UDP-N-acetylglucosamine diphosphorylase activity"/>
    <property type="evidence" value="ECO:0007669"/>
    <property type="project" value="UniProtKB-UniRule"/>
</dbReference>
<dbReference type="GO" id="GO:0000902">
    <property type="term" value="P:cell morphogenesis"/>
    <property type="evidence" value="ECO:0007669"/>
    <property type="project" value="UniProtKB-UniRule"/>
</dbReference>
<dbReference type="GO" id="GO:0071555">
    <property type="term" value="P:cell wall organization"/>
    <property type="evidence" value="ECO:0007669"/>
    <property type="project" value="UniProtKB-KW"/>
</dbReference>
<dbReference type="GO" id="GO:0009245">
    <property type="term" value="P:lipid A biosynthetic process"/>
    <property type="evidence" value="ECO:0007669"/>
    <property type="project" value="UniProtKB-UniRule"/>
</dbReference>
<dbReference type="GO" id="GO:0009252">
    <property type="term" value="P:peptidoglycan biosynthetic process"/>
    <property type="evidence" value="ECO:0007669"/>
    <property type="project" value="UniProtKB-UniRule"/>
</dbReference>
<dbReference type="GO" id="GO:0008360">
    <property type="term" value="P:regulation of cell shape"/>
    <property type="evidence" value="ECO:0007669"/>
    <property type="project" value="UniProtKB-KW"/>
</dbReference>
<dbReference type="GO" id="GO:0006048">
    <property type="term" value="P:UDP-N-acetylglucosamine biosynthetic process"/>
    <property type="evidence" value="ECO:0007669"/>
    <property type="project" value="UniProtKB-UniPathway"/>
</dbReference>
<dbReference type="CDD" id="cd02540">
    <property type="entry name" value="GT2_GlmU_N_bac"/>
    <property type="match status" value="1"/>
</dbReference>
<dbReference type="CDD" id="cd03353">
    <property type="entry name" value="LbH_GlmU_C"/>
    <property type="match status" value="1"/>
</dbReference>
<dbReference type="Gene3D" id="2.160.10.10">
    <property type="entry name" value="Hexapeptide repeat proteins"/>
    <property type="match status" value="1"/>
</dbReference>
<dbReference type="Gene3D" id="3.90.550.10">
    <property type="entry name" value="Spore Coat Polysaccharide Biosynthesis Protein SpsA, Chain A"/>
    <property type="match status" value="1"/>
</dbReference>
<dbReference type="HAMAP" id="MF_01631">
    <property type="entry name" value="GlmU"/>
    <property type="match status" value="1"/>
</dbReference>
<dbReference type="InterPro" id="IPR005882">
    <property type="entry name" value="Bifunctional_GlmU"/>
</dbReference>
<dbReference type="InterPro" id="IPR050065">
    <property type="entry name" value="GlmU-like"/>
</dbReference>
<dbReference type="InterPro" id="IPR038009">
    <property type="entry name" value="GlmU_C_LbH"/>
</dbReference>
<dbReference type="InterPro" id="IPR001451">
    <property type="entry name" value="Hexapep"/>
</dbReference>
<dbReference type="InterPro" id="IPR018357">
    <property type="entry name" value="Hexapep_transf_CS"/>
</dbReference>
<dbReference type="InterPro" id="IPR025877">
    <property type="entry name" value="MobA-like_NTP_Trfase"/>
</dbReference>
<dbReference type="InterPro" id="IPR029044">
    <property type="entry name" value="Nucleotide-diphossugar_trans"/>
</dbReference>
<dbReference type="InterPro" id="IPR011004">
    <property type="entry name" value="Trimer_LpxA-like_sf"/>
</dbReference>
<dbReference type="NCBIfam" id="TIGR01173">
    <property type="entry name" value="glmU"/>
    <property type="match status" value="1"/>
</dbReference>
<dbReference type="NCBIfam" id="NF010936">
    <property type="entry name" value="PRK14356.1"/>
    <property type="match status" value="1"/>
</dbReference>
<dbReference type="PANTHER" id="PTHR43584:SF3">
    <property type="entry name" value="BIFUNCTIONAL PROTEIN GLMU"/>
    <property type="match status" value="1"/>
</dbReference>
<dbReference type="PANTHER" id="PTHR43584">
    <property type="entry name" value="NUCLEOTIDYL TRANSFERASE"/>
    <property type="match status" value="1"/>
</dbReference>
<dbReference type="Pfam" id="PF00132">
    <property type="entry name" value="Hexapep"/>
    <property type="match status" value="1"/>
</dbReference>
<dbReference type="Pfam" id="PF12804">
    <property type="entry name" value="NTP_transf_3"/>
    <property type="match status" value="1"/>
</dbReference>
<dbReference type="SUPFAM" id="SSF53448">
    <property type="entry name" value="Nucleotide-diphospho-sugar transferases"/>
    <property type="match status" value="1"/>
</dbReference>
<dbReference type="SUPFAM" id="SSF51161">
    <property type="entry name" value="Trimeric LpxA-like enzymes"/>
    <property type="match status" value="1"/>
</dbReference>
<dbReference type="PROSITE" id="PS00101">
    <property type="entry name" value="HEXAPEP_TRANSFERASES"/>
    <property type="match status" value="1"/>
</dbReference>
<comment type="function">
    <text evidence="1">Catalyzes the last two sequential reactions in the de novo biosynthetic pathway for UDP-N-acetylglucosamine (UDP-GlcNAc). The C-terminal domain catalyzes the transfer of acetyl group from acetyl coenzyme A to glucosamine-1-phosphate (GlcN-1-P) to produce N-acetylglucosamine-1-phosphate (GlcNAc-1-P), which is converted into UDP-GlcNAc by the transfer of uridine 5-monophosphate (from uridine 5-triphosphate), a reaction catalyzed by the N-terminal domain.</text>
</comment>
<comment type="catalytic activity">
    <reaction evidence="1">
        <text>alpha-D-glucosamine 1-phosphate + acetyl-CoA = N-acetyl-alpha-D-glucosamine 1-phosphate + CoA + H(+)</text>
        <dbReference type="Rhea" id="RHEA:13725"/>
        <dbReference type="ChEBI" id="CHEBI:15378"/>
        <dbReference type="ChEBI" id="CHEBI:57287"/>
        <dbReference type="ChEBI" id="CHEBI:57288"/>
        <dbReference type="ChEBI" id="CHEBI:57776"/>
        <dbReference type="ChEBI" id="CHEBI:58516"/>
        <dbReference type="EC" id="2.3.1.157"/>
    </reaction>
</comment>
<comment type="catalytic activity">
    <reaction evidence="1">
        <text>N-acetyl-alpha-D-glucosamine 1-phosphate + UTP + H(+) = UDP-N-acetyl-alpha-D-glucosamine + diphosphate</text>
        <dbReference type="Rhea" id="RHEA:13509"/>
        <dbReference type="ChEBI" id="CHEBI:15378"/>
        <dbReference type="ChEBI" id="CHEBI:33019"/>
        <dbReference type="ChEBI" id="CHEBI:46398"/>
        <dbReference type="ChEBI" id="CHEBI:57705"/>
        <dbReference type="ChEBI" id="CHEBI:57776"/>
        <dbReference type="EC" id="2.7.7.23"/>
    </reaction>
</comment>
<comment type="cofactor">
    <cofactor evidence="1">
        <name>Mg(2+)</name>
        <dbReference type="ChEBI" id="CHEBI:18420"/>
    </cofactor>
    <text evidence="1">Binds 1 Mg(2+) ion per subunit.</text>
</comment>
<comment type="pathway">
    <text evidence="1">Nucleotide-sugar biosynthesis; UDP-N-acetyl-alpha-D-glucosamine biosynthesis; N-acetyl-alpha-D-glucosamine 1-phosphate from alpha-D-glucosamine 6-phosphate (route II): step 2/2.</text>
</comment>
<comment type="pathway">
    <text evidence="1">Nucleotide-sugar biosynthesis; UDP-N-acetyl-alpha-D-glucosamine biosynthesis; UDP-N-acetyl-alpha-D-glucosamine from N-acetyl-alpha-D-glucosamine 1-phosphate: step 1/1.</text>
</comment>
<comment type="pathway">
    <text evidence="1">Bacterial outer membrane biogenesis; LPS lipid A biosynthesis.</text>
</comment>
<comment type="subunit">
    <text evidence="1">Homotrimer.</text>
</comment>
<comment type="subcellular location">
    <subcellularLocation>
        <location evidence="1">Cytoplasm</location>
    </subcellularLocation>
</comment>
<comment type="similarity">
    <text evidence="1">In the N-terminal section; belongs to the N-acetylglucosamine-1-phosphate uridyltransferase family.</text>
</comment>
<comment type="similarity">
    <text evidence="1">In the C-terminal section; belongs to the transferase hexapeptide repeat family.</text>
</comment>
<evidence type="ECO:0000255" key="1">
    <source>
        <dbReference type="HAMAP-Rule" id="MF_01631"/>
    </source>
</evidence>
<feature type="chain" id="PRO_0000233769" description="Bifunctional protein GlmU">
    <location>
        <begin position="1"/>
        <end position="455"/>
    </location>
</feature>
<feature type="region of interest" description="Pyrophosphorylase" evidence="1">
    <location>
        <begin position="1"/>
        <end position="232"/>
    </location>
</feature>
<feature type="region of interest" description="Linker" evidence="1">
    <location>
        <begin position="233"/>
        <end position="253"/>
    </location>
</feature>
<feature type="region of interest" description="N-acetyltransferase" evidence="1">
    <location>
        <begin position="254"/>
        <end position="455"/>
    </location>
</feature>
<feature type="active site" description="Proton acceptor" evidence="1">
    <location>
        <position position="366"/>
    </location>
</feature>
<feature type="binding site" evidence="1">
    <location>
        <begin position="10"/>
        <end position="13"/>
    </location>
    <ligand>
        <name>UDP-N-acetyl-alpha-D-glucosamine</name>
        <dbReference type="ChEBI" id="CHEBI:57705"/>
    </ligand>
</feature>
<feature type="binding site" evidence="1">
    <location>
        <position position="24"/>
    </location>
    <ligand>
        <name>UDP-N-acetyl-alpha-D-glucosamine</name>
        <dbReference type="ChEBI" id="CHEBI:57705"/>
    </ligand>
</feature>
<feature type="binding site" evidence="1">
    <location>
        <position position="75"/>
    </location>
    <ligand>
        <name>UDP-N-acetyl-alpha-D-glucosamine</name>
        <dbReference type="ChEBI" id="CHEBI:57705"/>
    </ligand>
</feature>
<feature type="binding site" evidence="1">
    <location>
        <begin position="80"/>
        <end position="81"/>
    </location>
    <ligand>
        <name>UDP-N-acetyl-alpha-D-glucosamine</name>
        <dbReference type="ChEBI" id="CHEBI:57705"/>
    </ligand>
</feature>
<feature type="binding site" evidence="1">
    <location>
        <position position="106"/>
    </location>
    <ligand>
        <name>Mg(2+)</name>
        <dbReference type="ChEBI" id="CHEBI:18420"/>
    </ligand>
</feature>
<feature type="binding site" evidence="1">
    <location>
        <position position="141"/>
    </location>
    <ligand>
        <name>UDP-N-acetyl-alpha-D-glucosamine</name>
        <dbReference type="ChEBI" id="CHEBI:57705"/>
    </ligand>
</feature>
<feature type="binding site" evidence="1">
    <location>
        <position position="155"/>
    </location>
    <ligand>
        <name>UDP-N-acetyl-alpha-D-glucosamine</name>
        <dbReference type="ChEBI" id="CHEBI:57705"/>
    </ligand>
</feature>
<feature type="binding site" evidence="1">
    <location>
        <position position="172"/>
    </location>
    <ligand>
        <name>UDP-N-acetyl-alpha-D-glucosamine</name>
        <dbReference type="ChEBI" id="CHEBI:57705"/>
    </ligand>
</feature>
<feature type="binding site" evidence="1">
    <location>
        <position position="230"/>
    </location>
    <ligand>
        <name>Mg(2+)</name>
        <dbReference type="ChEBI" id="CHEBI:18420"/>
    </ligand>
</feature>
<feature type="binding site" evidence="1">
    <location>
        <position position="230"/>
    </location>
    <ligand>
        <name>UDP-N-acetyl-alpha-D-glucosamine</name>
        <dbReference type="ChEBI" id="CHEBI:57705"/>
    </ligand>
</feature>
<feature type="binding site" evidence="1">
    <location>
        <position position="336"/>
    </location>
    <ligand>
        <name>UDP-N-acetyl-alpha-D-glucosamine</name>
        <dbReference type="ChEBI" id="CHEBI:57705"/>
    </ligand>
</feature>
<feature type="binding site" evidence="1">
    <location>
        <position position="354"/>
    </location>
    <ligand>
        <name>UDP-N-acetyl-alpha-D-glucosamine</name>
        <dbReference type="ChEBI" id="CHEBI:57705"/>
    </ligand>
</feature>
<feature type="binding site" evidence="1">
    <location>
        <position position="369"/>
    </location>
    <ligand>
        <name>UDP-N-acetyl-alpha-D-glucosamine</name>
        <dbReference type="ChEBI" id="CHEBI:57705"/>
    </ligand>
</feature>
<feature type="binding site" evidence="1">
    <location>
        <position position="380"/>
    </location>
    <ligand>
        <name>UDP-N-acetyl-alpha-D-glucosamine</name>
        <dbReference type="ChEBI" id="CHEBI:57705"/>
    </ligand>
</feature>
<feature type="binding site" evidence="1">
    <location>
        <position position="383"/>
    </location>
    <ligand>
        <name>acetyl-CoA</name>
        <dbReference type="ChEBI" id="CHEBI:57288"/>
    </ligand>
</feature>
<feature type="binding site" evidence="1">
    <location>
        <begin position="389"/>
        <end position="390"/>
    </location>
    <ligand>
        <name>acetyl-CoA</name>
        <dbReference type="ChEBI" id="CHEBI:57288"/>
    </ligand>
</feature>
<feature type="binding site" evidence="1">
    <location>
        <position position="408"/>
    </location>
    <ligand>
        <name>acetyl-CoA</name>
        <dbReference type="ChEBI" id="CHEBI:57288"/>
    </ligand>
</feature>
<feature type="binding site" evidence="1">
    <location>
        <position position="426"/>
    </location>
    <ligand>
        <name>acetyl-CoA</name>
        <dbReference type="ChEBI" id="CHEBI:57288"/>
    </ligand>
</feature>
<feature type="binding site" evidence="1">
    <location>
        <position position="443"/>
    </location>
    <ligand>
        <name>acetyl-CoA</name>
        <dbReference type="ChEBI" id="CHEBI:57288"/>
    </ligand>
</feature>
<reference key="1">
    <citation type="journal article" date="2004" name="Nat. Biotechnol.">
        <title>The genome sequence of the anaerobic, sulfate-reducing bacterium Desulfovibrio vulgaris Hildenborough.</title>
        <authorList>
            <person name="Heidelberg J.F."/>
            <person name="Seshadri R."/>
            <person name="Haveman S.A."/>
            <person name="Hemme C.L."/>
            <person name="Paulsen I.T."/>
            <person name="Kolonay J.F."/>
            <person name="Eisen J.A."/>
            <person name="Ward N.L."/>
            <person name="Methe B.A."/>
            <person name="Brinkac L.M."/>
            <person name="Daugherty S.C."/>
            <person name="DeBoy R.T."/>
            <person name="Dodson R.J."/>
            <person name="Durkin A.S."/>
            <person name="Madupu R."/>
            <person name="Nelson W.C."/>
            <person name="Sullivan S.A."/>
            <person name="Fouts D.E."/>
            <person name="Haft D.H."/>
            <person name="Selengut J."/>
            <person name="Peterson J.D."/>
            <person name="Davidsen T.M."/>
            <person name="Zafar N."/>
            <person name="Zhou L."/>
            <person name="Radune D."/>
            <person name="Dimitrov G."/>
            <person name="Hance M."/>
            <person name="Tran K."/>
            <person name="Khouri H.M."/>
            <person name="Gill J."/>
            <person name="Utterback T.R."/>
            <person name="Feldblyum T.V."/>
            <person name="Wall J.D."/>
            <person name="Voordouw G."/>
            <person name="Fraser C.M."/>
        </authorList>
    </citation>
    <scope>NUCLEOTIDE SEQUENCE [LARGE SCALE GENOMIC DNA]</scope>
    <source>
        <strain>ATCC 29579 / DSM 644 / CCUG 34227 / NCIMB 8303 / VKM B-1760 / Hildenborough</strain>
    </source>
</reference>
<gene>
    <name evidence="1" type="primary">glmU</name>
    <name type="ordered locus">DVU_2668</name>
</gene>
<organism>
    <name type="scientific">Nitratidesulfovibrio vulgaris (strain ATCC 29579 / DSM 644 / CCUG 34227 / NCIMB 8303 / VKM B-1760 / Hildenborough)</name>
    <name type="common">Desulfovibrio vulgaris</name>
    <dbReference type="NCBI Taxonomy" id="882"/>
    <lineage>
        <taxon>Bacteria</taxon>
        <taxon>Pseudomonadati</taxon>
        <taxon>Thermodesulfobacteriota</taxon>
        <taxon>Desulfovibrionia</taxon>
        <taxon>Desulfovibrionales</taxon>
        <taxon>Desulfovibrionaceae</taxon>
        <taxon>Nitratidesulfovibrio</taxon>
    </lineage>
</organism>